<dbReference type="EC" id="2.6.1.9" evidence="1"/>
<dbReference type="EMBL" id="CP000708">
    <property type="protein sequence ID" value="ABQ60122.1"/>
    <property type="status" value="ALT_INIT"/>
    <property type="molecule type" value="Genomic_DNA"/>
</dbReference>
<dbReference type="SMR" id="A5VSV7"/>
<dbReference type="KEGG" id="bov:BOV_1912"/>
<dbReference type="HOGENOM" id="CLU_017584_3_3_5"/>
<dbReference type="UniPathway" id="UPA00031">
    <property type="reaction ID" value="UER00012"/>
</dbReference>
<dbReference type="PRO" id="PR:A5VSV7"/>
<dbReference type="Proteomes" id="UP000006383">
    <property type="component" value="Chromosome I"/>
</dbReference>
<dbReference type="GO" id="GO:0004400">
    <property type="term" value="F:histidinol-phosphate transaminase activity"/>
    <property type="evidence" value="ECO:0007669"/>
    <property type="project" value="UniProtKB-UniRule"/>
</dbReference>
<dbReference type="GO" id="GO:0030170">
    <property type="term" value="F:pyridoxal phosphate binding"/>
    <property type="evidence" value="ECO:0007669"/>
    <property type="project" value="InterPro"/>
</dbReference>
<dbReference type="GO" id="GO:0000105">
    <property type="term" value="P:L-histidine biosynthetic process"/>
    <property type="evidence" value="ECO:0007669"/>
    <property type="project" value="UniProtKB-UniRule"/>
</dbReference>
<dbReference type="CDD" id="cd00609">
    <property type="entry name" value="AAT_like"/>
    <property type="match status" value="1"/>
</dbReference>
<dbReference type="Gene3D" id="3.90.1150.10">
    <property type="entry name" value="Aspartate Aminotransferase, domain 1"/>
    <property type="match status" value="1"/>
</dbReference>
<dbReference type="Gene3D" id="3.40.640.10">
    <property type="entry name" value="Type I PLP-dependent aspartate aminotransferase-like (Major domain)"/>
    <property type="match status" value="1"/>
</dbReference>
<dbReference type="HAMAP" id="MF_01023">
    <property type="entry name" value="HisC_aminotrans_2"/>
    <property type="match status" value="1"/>
</dbReference>
<dbReference type="InterPro" id="IPR004839">
    <property type="entry name" value="Aminotransferase_I/II_large"/>
</dbReference>
<dbReference type="InterPro" id="IPR005861">
    <property type="entry name" value="HisP_aminotrans"/>
</dbReference>
<dbReference type="InterPro" id="IPR050106">
    <property type="entry name" value="HistidinolP_aminotransfase"/>
</dbReference>
<dbReference type="InterPro" id="IPR015424">
    <property type="entry name" value="PyrdxlP-dep_Trfase"/>
</dbReference>
<dbReference type="InterPro" id="IPR015421">
    <property type="entry name" value="PyrdxlP-dep_Trfase_major"/>
</dbReference>
<dbReference type="InterPro" id="IPR015422">
    <property type="entry name" value="PyrdxlP-dep_Trfase_small"/>
</dbReference>
<dbReference type="NCBIfam" id="TIGR01141">
    <property type="entry name" value="hisC"/>
    <property type="match status" value="1"/>
</dbReference>
<dbReference type="PANTHER" id="PTHR43643:SF3">
    <property type="entry name" value="HISTIDINOL-PHOSPHATE AMINOTRANSFERASE"/>
    <property type="match status" value="1"/>
</dbReference>
<dbReference type="PANTHER" id="PTHR43643">
    <property type="entry name" value="HISTIDINOL-PHOSPHATE AMINOTRANSFERASE 2"/>
    <property type="match status" value="1"/>
</dbReference>
<dbReference type="Pfam" id="PF00155">
    <property type="entry name" value="Aminotran_1_2"/>
    <property type="match status" value="1"/>
</dbReference>
<dbReference type="SUPFAM" id="SSF53383">
    <property type="entry name" value="PLP-dependent transferases"/>
    <property type="match status" value="1"/>
</dbReference>
<evidence type="ECO:0000255" key="1">
    <source>
        <dbReference type="HAMAP-Rule" id="MF_01023"/>
    </source>
</evidence>
<evidence type="ECO:0000305" key="2"/>
<sequence length="365" mass="39967">MQKPTRPQPKAGVLDIAAYVPGKEHVEGVAKVYKLSSNETPLGPSPHAREAYRHAGEKLELYPDGQALALRQAIAETQGLNISNILCGNGSDELLGLLCQTYLAPGDETIITEHGFAVYKIQTLAAGATPVTVKEKNERIDVDAILAGVTARTKIVFIANPANPTGTYLPFEEVRRLHAGLPQHVLLVLDAAYAEYVRRNDYEAGLELVSSNENVVMTRTFSKIHGLPGLRIGWIYAPLHIIDAMNRIRGPFNMNSAAIAAGAAAIRDRAHVEKSVAYNEKWLAWLTEEFTRLGLRVTPSVTNFLLIHFPDDAAHSADKADEWLSRRGYILRRVGGYGFPNALRMTVGPEEANRGVVAALTEFLK</sequence>
<name>HIS8_BRUO2</name>
<feature type="chain" id="PRO_0000319745" description="Histidinol-phosphate aminotransferase">
    <location>
        <begin position="1"/>
        <end position="365"/>
    </location>
</feature>
<feature type="modified residue" description="N6-(pyridoxal phosphate)lysine" evidence="1">
    <location>
        <position position="223"/>
    </location>
</feature>
<keyword id="KW-0028">Amino-acid biosynthesis</keyword>
<keyword id="KW-0032">Aminotransferase</keyword>
<keyword id="KW-0368">Histidine biosynthesis</keyword>
<keyword id="KW-0663">Pyridoxal phosphate</keyword>
<keyword id="KW-0808">Transferase</keyword>
<comment type="catalytic activity">
    <reaction evidence="1">
        <text>L-histidinol phosphate + 2-oxoglutarate = 3-(imidazol-4-yl)-2-oxopropyl phosphate + L-glutamate</text>
        <dbReference type="Rhea" id="RHEA:23744"/>
        <dbReference type="ChEBI" id="CHEBI:16810"/>
        <dbReference type="ChEBI" id="CHEBI:29985"/>
        <dbReference type="ChEBI" id="CHEBI:57766"/>
        <dbReference type="ChEBI" id="CHEBI:57980"/>
        <dbReference type="EC" id="2.6.1.9"/>
    </reaction>
</comment>
<comment type="cofactor">
    <cofactor evidence="1">
        <name>pyridoxal 5'-phosphate</name>
        <dbReference type="ChEBI" id="CHEBI:597326"/>
    </cofactor>
</comment>
<comment type="pathway">
    <text evidence="1">Amino-acid biosynthesis; L-histidine biosynthesis; L-histidine from 5-phospho-alpha-D-ribose 1-diphosphate: step 7/9.</text>
</comment>
<comment type="subunit">
    <text evidence="1">Homodimer.</text>
</comment>
<comment type="similarity">
    <text evidence="1">Belongs to the class-II pyridoxal-phosphate-dependent aminotransferase family. Histidinol-phosphate aminotransferase subfamily.</text>
</comment>
<comment type="sequence caution" evidence="2">
    <conflict type="erroneous initiation">
        <sequence resource="EMBL-CDS" id="ABQ60122"/>
    </conflict>
</comment>
<proteinExistence type="inferred from homology"/>
<gene>
    <name evidence="1" type="primary">hisC</name>
    <name type="ordered locus">BOV_1912</name>
</gene>
<protein>
    <recommendedName>
        <fullName evidence="1">Histidinol-phosphate aminotransferase</fullName>
        <ecNumber evidence="1">2.6.1.9</ecNumber>
    </recommendedName>
    <alternativeName>
        <fullName evidence="1">Imidazole acetol-phosphate transaminase</fullName>
    </alternativeName>
</protein>
<organism>
    <name type="scientific">Brucella ovis (strain ATCC 25840 / 63/290 / NCTC 10512)</name>
    <dbReference type="NCBI Taxonomy" id="444178"/>
    <lineage>
        <taxon>Bacteria</taxon>
        <taxon>Pseudomonadati</taxon>
        <taxon>Pseudomonadota</taxon>
        <taxon>Alphaproteobacteria</taxon>
        <taxon>Hyphomicrobiales</taxon>
        <taxon>Brucellaceae</taxon>
        <taxon>Brucella/Ochrobactrum group</taxon>
        <taxon>Brucella</taxon>
    </lineage>
</organism>
<reference key="1">
    <citation type="journal article" date="2009" name="PLoS ONE">
        <title>Genome degradation in Brucella ovis corresponds with narrowing of its host range and tissue tropism.</title>
        <authorList>
            <person name="Tsolis R.M."/>
            <person name="Seshadri R."/>
            <person name="Santos R.L."/>
            <person name="Sangari F.J."/>
            <person name="Lobo J.M."/>
            <person name="de Jong M.F."/>
            <person name="Ren Q."/>
            <person name="Myers G."/>
            <person name="Brinkac L.M."/>
            <person name="Nelson W.C."/>
            <person name="Deboy R.T."/>
            <person name="Angiuoli S."/>
            <person name="Khouri H."/>
            <person name="Dimitrov G."/>
            <person name="Robinson J.R."/>
            <person name="Mulligan S."/>
            <person name="Walker R.L."/>
            <person name="Elzer P.E."/>
            <person name="Hassan K.A."/>
            <person name="Paulsen I.T."/>
        </authorList>
    </citation>
    <scope>NUCLEOTIDE SEQUENCE [LARGE SCALE GENOMIC DNA]</scope>
    <source>
        <strain>ATCC 25840 / 63/290 / NCTC 10512</strain>
    </source>
</reference>
<accession>A5VSV7</accession>